<sequence length="175" mass="18566">MADPARARRLAKRITTIVASAIEYEIKDPGLVGVTITDAKVTADLHDATVYYTVMGPTLDDEPDYAAAAAALERAKGVLRTKVGAGTGVRFTPTLTFTRDVTSDTVHRMDELLARARAADADLARVRVGAKPAGEADPYRDRGSADEPSDAGGLVIRTSDGLEAENTGDDYQAED</sequence>
<proteinExistence type="inferred from homology"/>
<protein>
    <recommendedName>
        <fullName evidence="1">Ribosome-binding factor A</fullName>
    </recommendedName>
</protein>
<accession>B2HKS3</accession>
<evidence type="ECO:0000255" key="1">
    <source>
        <dbReference type="HAMAP-Rule" id="MF_00003"/>
    </source>
</evidence>
<evidence type="ECO:0000256" key="2">
    <source>
        <dbReference type="SAM" id="MobiDB-lite"/>
    </source>
</evidence>
<comment type="function">
    <text evidence="1">One of several proteins that assist in the late maturation steps of the functional core of the 30S ribosomal subunit. Associates with free 30S ribosomal subunits (but not with 30S subunits that are part of 70S ribosomes or polysomes). Required for efficient processing of 16S rRNA. May interact with the 5'-terminal helix region of 16S rRNA.</text>
</comment>
<comment type="subunit">
    <text evidence="1">Monomer. Binds 30S ribosomal subunits, but not 50S ribosomal subunits or 70S ribosomes.</text>
</comment>
<comment type="subcellular location">
    <subcellularLocation>
        <location evidence="1">Cytoplasm</location>
    </subcellularLocation>
</comment>
<comment type="similarity">
    <text evidence="1">Belongs to the RbfA family.</text>
</comment>
<reference key="1">
    <citation type="journal article" date="2008" name="Genome Res.">
        <title>Insights from the complete genome sequence of Mycobacterium marinum on the evolution of Mycobacterium tuberculosis.</title>
        <authorList>
            <person name="Stinear T.P."/>
            <person name="Seemann T."/>
            <person name="Harrison P.F."/>
            <person name="Jenkin G.A."/>
            <person name="Davies J.K."/>
            <person name="Johnson P.D."/>
            <person name="Abdellah Z."/>
            <person name="Arrowsmith C."/>
            <person name="Chillingworth T."/>
            <person name="Churcher C."/>
            <person name="Clarke K."/>
            <person name="Cronin A."/>
            <person name="Davis P."/>
            <person name="Goodhead I."/>
            <person name="Holroyd N."/>
            <person name="Jagels K."/>
            <person name="Lord A."/>
            <person name="Moule S."/>
            <person name="Mungall K."/>
            <person name="Norbertczak H."/>
            <person name="Quail M.A."/>
            <person name="Rabbinowitsch E."/>
            <person name="Walker D."/>
            <person name="White B."/>
            <person name="Whitehead S."/>
            <person name="Small P.L."/>
            <person name="Brosch R."/>
            <person name="Ramakrishnan L."/>
            <person name="Fischbach M.A."/>
            <person name="Parkhill J."/>
            <person name="Cole S.T."/>
        </authorList>
    </citation>
    <scope>NUCLEOTIDE SEQUENCE [LARGE SCALE GENOMIC DNA]</scope>
    <source>
        <strain>ATCC BAA-535 / M</strain>
    </source>
</reference>
<organism>
    <name type="scientific">Mycobacterium marinum (strain ATCC BAA-535 / M)</name>
    <dbReference type="NCBI Taxonomy" id="216594"/>
    <lineage>
        <taxon>Bacteria</taxon>
        <taxon>Bacillati</taxon>
        <taxon>Actinomycetota</taxon>
        <taxon>Actinomycetes</taxon>
        <taxon>Mycobacteriales</taxon>
        <taxon>Mycobacteriaceae</taxon>
        <taxon>Mycobacterium</taxon>
        <taxon>Mycobacterium ulcerans group</taxon>
    </lineage>
</organism>
<dbReference type="EMBL" id="CP000854">
    <property type="protein sequence ID" value="ACC40344.1"/>
    <property type="molecule type" value="Genomic_DNA"/>
</dbReference>
<dbReference type="RefSeq" id="WP_012393691.1">
    <property type="nucleotide sequence ID" value="NC_010612.1"/>
</dbReference>
<dbReference type="SMR" id="B2HKS3"/>
<dbReference type="STRING" id="216594.MMAR_1895"/>
<dbReference type="GeneID" id="34343476"/>
<dbReference type="KEGG" id="mmi:MMAR_1895"/>
<dbReference type="eggNOG" id="COG0858">
    <property type="taxonomic scope" value="Bacteria"/>
</dbReference>
<dbReference type="HOGENOM" id="CLU_089475_0_0_11"/>
<dbReference type="OrthoDB" id="307788at2"/>
<dbReference type="Proteomes" id="UP000001190">
    <property type="component" value="Chromosome"/>
</dbReference>
<dbReference type="GO" id="GO:0005829">
    <property type="term" value="C:cytosol"/>
    <property type="evidence" value="ECO:0007669"/>
    <property type="project" value="TreeGrafter"/>
</dbReference>
<dbReference type="GO" id="GO:0043024">
    <property type="term" value="F:ribosomal small subunit binding"/>
    <property type="evidence" value="ECO:0007669"/>
    <property type="project" value="TreeGrafter"/>
</dbReference>
<dbReference type="GO" id="GO:0030490">
    <property type="term" value="P:maturation of SSU-rRNA"/>
    <property type="evidence" value="ECO:0007669"/>
    <property type="project" value="UniProtKB-UniRule"/>
</dbReference>
<dbReference type="FunFam" id="3.30.300.20:FF:000018">
    <property type="entry name" value="Ribosome-binding factor A"/>
    <property type="match status" value="1"/>
</dbReference>
<dbReference type="Gene3D" id="3.30.300.20">
    <property type="match status" value="1"/>
</dbReference>
<dbReference type="HAMAP" id="MF_00003">
    <property type="entry name" value="RbfA"/>
    <property type="match status" value="1"/>
</dbReference>
<dbReference type="InterPro" id="IPR015946">
    <property type="entry name" value="KH_dom-like_a/b"/>
</dbReference>
<dbReference type="InterPro" id="IPR000238">
    <property type="entry name" value="RbfA"/>
</dbReference>
<dbReference type="InterPro" id="IPR023799">
    <property type="entry name" value="RbfA_dom_sf"/>
</dbReference>
<dbReference type="InterPro" id="IPR020053">
    <property type="entry name" value="Ribosome-bd_factorA_CS"/>
</dbReference>
<dbReference type="NCBIfam" id="TIGR00082">
    <property type="entry name" value="rbfA"/>
    <property type="match status" value="1"/>
</dbReference>
<dbReference type="PANTHER" id="PTHR33515">
    <property type="entry name" value="RIBOSOME-BINDING FACTOR A, CHLOROPLASTIC-RELATED"/>
    <property type="match status" value="1"/>
</dbReference>
<dbReference type="PANTHER" id="PTHR33515:SF1">
    <property type="entry name" value="RIBOSOME-BINDING FACTOR A, CHLOROPLASTIC-RELATED"/>
    <property type="match status" value="1"/>
</dbReference>
<dbReference type="Pfam" id="PF02033">
    <property type="entry name" value="RBFA"/>
    <property type="match status" value="1"/>
</dbReference>
<dbReference type="SUPFAM" id="SSF89919">
    <property type="entry name" value="Ribosome-binding factor A, RbfA"/>
    <property type="match status" value="1"/>
</dbReference>
<dbReference type="PROSITE" id="PS01319">
    <property type="entry name" value="RBFA"/>
    <property type="match status" value="1"/>
</dbReference>
<gene>
    <name evidence="1" type="primary">rbfA</name>
    <name type="ordered locus">MMAR_1895</name>
</gene>
<name>RBFA_MYCMM</name>
<feature type="chain" id="PRO_1000088907" description="Ribosome-binding factor A">
    <location>
        <begin position="1"/>
        <end position="175"/>
    </location>
</feature>
<feature type="region of interest" description="Disordered" evidence="2">
    <location>
        <begin position="129"/>
        <end position="175"/>
    </location>
</feature>
<feature type="compositionally biased region" description="Acidic residues" evidence="2">
    <location>
        <begin position="162"/>
        <end position="175"/>
    </location>
</feature>
<keyword id="KW-0963">Cytoplasm</keyword>
<keyword id="KW-1185">Reference proteome</keyword>
<keyword id="KW-0690">Ribosome biogenesis</keyword>